<reference key="1">
    <citation type="journal article" date="2005" name="Proc. Natl. Acad. Sci. U.S.A.">
        <title>Complete genome sequence of Vibrio fischeri: a symbiotic bacterium with pathogenic congeners.</title>
        <authorList>
            <person name="Ruby E.G."/>
            <person name="Urbanowski M."/>
            <person name="Campbell J."/>
            <person name="Dunn A."/>
            <person name="Faini M."/>
            <person name="Gunsalus R."/>
            <person name="Lostroh P."/>
            <person name="Lupp C."/>
            <person name="McCann J."/>
            <person name="Millikan D."/>
            <person name="Schaefer A."/>
            <person name="Stabb E."/>
            <person name="Stevens A."/>
            <person name="Visick K."/>
            <person name="Whistler C."/>
            <person name="Greenberg E.P."/>
        </authorList>
    </citation>
    <scope>NUCLEOTIDE SEQUENCE [LARGE SCALE GENOMIC DNA]</scope>
    <source>
        <strain>ATCC 700601 / ES114</strain>
    </source>
</reference>
<sequence length="510" mass="55403">MSAKKPMALVILDGYGHRETQADNAITNANTPVLDGLMANQPNTLISASGMDVGLPDGQMGNSEVGHTNIGAGRVVYQDLTRITKAISDGEFQQNETLVNAIDKAVKAGKAVHIMGLMSPGGVHSHEDHIYAAVEMAAARGAEKIYLHCFLDGRDTPPRSAENSLKNFQELFAKLGKGRIASLVGRYYAMDRDNNWERVQKAYDLMTEAKAEFTFATAVEGLEAAYAREENDEFVQATEIKAEGEESAAIVDGDAVIFMNYRADRARQITRTFVPSFDGFTRNVFPAIDFVMLTQYAADIPLLCAFAPASLENTYGEWLSKEGKTQLRISETEKYAHVTFFFNGGIEDEFEGEERQLVASPKVATYDLQPEMSAPELTEKLVAAIKSGKYDAIVCNFPNCDMVGHTGVYDAAVKAVESLDECIGKVVEAIKEVDGQLLITADHGNAEMMIDPETGGVHTAHTNLPVPLIYVGSKAVEFKEGGKLSDLAPTMLALTDTAIPAEMSGEVLFK</sequence>
<organism>
    <name type="scientific">Aliivibrio fischeri (strain ATCC 700601 / ES114)</name>
    <name type="common">Vibrio fischeri</name>
    <dbReference type="NCBI Taxonomy" id="312309"/>
    <lineage>
        <taxon>Bacteria</taxon>
        <taxon>Pseudomonadati</taxon>
        <taxon>Pseudomonadota</taxon>
        <taxon>Gammaproteobacteria</taxon>
        <taxon>Vibrionales</taxon>
        <taxon>Vibrionaceae</taxon>
        <taxon>Aliivibrio</taxon>
    </lineage>
</organism>
<accession>Q5E8E9</accession>
<evidence type="ECO:0000255" key="1">
    <source>
        <dbReference type="HAMAP-Rule" id="MF_01038"/>
    </source>
</evidence>
<comment type="function">
    <text evidence="1">Catalyzes the interconversion of 2-phosphoglycerate and 3-phosphoglycerate.</text>
</comment>
<comment type="catalytic activity">
    <reaction evidence="1">
        <text>(2R)-2-phosphoglycerate = (2R)-3-phosphoglycerate</text>
        <dbReference type="Rhea" id="RHEA:15901"/>
        <dbReference type="ChEBI" id="CHEBI:58272"/>
        <dbReference type="ChEBI" id="CHEBI:58289"/>
        <dbReference type="EC" id="5.4.2.12"/>
    </reaction>
</comment>
<comment type="cofactor">
    <cofactor evidence="1">
        <name>Mn(2+)</name>
        <dbReference type="ChEBI" id="CHEBI:29035"/>
    </cofactor>
    <text evidence="1">Binds 2 manganese ions per subunit.</text>
</comment>
<comment type="pathway">
    <text evidence="1">Carbohydrate degradation; glycolysis; pyruvate from D-glyceraldehyde 3-phosphate: step 3/5.</text>
</comment>
<comment type="subunit">
    <text evidence="1">Monomer.</text>
</comment>
<comment type="similarity">
    <text evidence="1">Belongs to the BPG-independent phosphoglycerate mutase family.</text>
</comment>
<protein>
    <recommendedName>
        <fullName evidence="1">2,3-bisphosphoglycerate-independent phosphoglycerate mutase</fullName>
        <shortName evidence="1">BPG-independent PGAM</shortName>
        <shortName evidence="1">Phosphoglyceromutase</shortName>
        <shortName evidence="1">iPGM</shortName>
        <ecNumber evidence="1">5.4.2.12</ecNumber>
    </recommendedName>
</protein>
<feature type="chain" id="PRO_0000212227" description="2,3-bisphosphoglycerate-independent phosphoglycerate mutase">
    <location>
        <begin position="1"/>
        <end position="510"/>
    </location>
</feature>
<feature type="active site" description="Phosphoserine intermediate" evidence="1">
    <location>
        <position position="63"/>
    </location>
</feature>
<feature type="binding site" evidence="1">
    <location>
        <position position="13"/>
    </location>
    <ligand>
        <name>Mn(2+)</name>
        <dbReference type="ChEBI" id="CHEBI:29035"/>
        <label>2</label>
    </ligand>
</feature>
<feature type="binding site" evidence="1">
    <location>
        <position position="63"/>
    </location>
    <ligand>
        <name>Mn(2+)</name>
        <dbReference type="ChEBI" id="CHEBI:29035"/>
        <label>2</label>
    </ligand>
</feature>
<feature type="binding site" evidence="1">
    <location>
        <position position="124"/>
    </location>
    <ligand>
        <name>substrate</name>
    </ligand>
</feature>
<feature type="binding site" evidence="1">
    <location>
        <begin position="154"/>
        <end position="155"/>
    </location>
    <ligand>
        <name>substrate</name>
    </ligand>
</feature>
<feature type="binding site" evidence="1">
    <location>
        <position position="186"/>
    </location>
    <ligand>
        <name>substrate</name>
    </ligand>
</feature>
<feature type="binding site" evidence="1">
    <location>
        <position position="192"/>
    </location>
    <ligand>
        <name>substrate</name>
    </ligand>
</feature>
<feature type="binding site" evidence="1">
    <location>
        <begin position="262"/>
        <end position="265"/>
    </location>
    <ligand>
        <name>substrate</name>
    </ligand>
</feature>
<feature type="binding site" evidence="1">
    <location>
        <position position="334"/>
    </location>
    <ligand>
        <name>substrate</name>
    </ligand>
</feature>
<feature type="binding site" evidence="1">
    <location>
        <position position="401"/>
    </location>
    <ligand>
        <name>Mn(2+)</name>
        <dbReference type="ChEBI" id="CHEBI:29035"/>
        <label>1</label>
    </ligand>
</feature>
<feature type="binding site" evidence="1">
    <location>
        <position position="405"/>
    </location>
    <ligand>
        <name>Mn(2+)</name>
        <dbReference type="ChEBI" id="CHEBI:29035"/>
        <label>1</label>
    </ligand>
</feature>
<feature type="binding site" evidence="1">
    <location>
        <position position="442"/>
    </location>
    <ligand>
        <name>Mn(2+)</name>
        <dbReference type="ChEBI" id="CHEBI:29035"/>
        <label>2</label>
    </ligand>
</feature>
<feature type="binding site" evidence="1">
    <location>
        <position position="443"/>
    </location>
    <ligand>
        <name>Mn(2+)</name>
        <dbReference type="ChEBI" id="CHEBI:29035"/>
        <label>2</label>
    </ligand>
</feature>
<feature type="binding site" evidence="1">
    <location>
        <position position="461"/>
    </location>
    <ligand>
        <name>Mn(2+)</name>
        <dbReference type="ChEBI" id="CHEBI:29035"/>
        <label>1</label>
    </ligand>
</feature>
<proteinExistence type="inferred from homology"/>
<keyword id="KW-0324">Glycolysis</keyword>
<keyword id="KW-0413">Isomerase</keyword>
<keyword id="KW-0464">Manganese</keyword>
<keyword id="KW-0479">Metal-binding</keyword>
<keyword id="KW-1185">Reference proteome</keyword>
<dbReference type="EC" id="5.4.2.12" evidence="1"/>
<dbReference type="EMBL" id="CP000020">
    <property type="protein sequence ID" value="AAW84697.1"/>
    <property type="molecule type" value="Genomic_DNA"/>
</dbReference>
<dbReference type="RefSeq" id="WP_011261056.1">
    <property type="nucleotide sequence ID" value="NC_006840.2"/>
</dbReference>
<dbReference type="RefSeq" id="YP_203585.1">
    <property type="nucleotide sequence ID" value="NC_006840.2"/>
</dbReference>
<dbReference type="SMR" id="Q5E8E9"/>
<dbReference type="STRING" id="312309.VF_0202"/>
<dbReference type="EnsemblBacteria" id="AAW84697">
    <property type="protein sequence ID" value="AAW84697"/>
    <property type="gene ID" value="VF_0202"/>
</dbReference>
<dbReference type="GeneID" id="54162826"/>
<dbReference type="KEGG" id="vfi:VF_0202"/>
<dbReference type="PATRIC" id="fig|312309.11.peg.200"/>
<dbReference type="eggNOG" id="COG0696">
    <property type="taxonomic scope" value="Bacteria"/>
</dbReference>
<dbReference type="HOGENOM" id="CLU_026099_2_0_6"/>
<dbReference type="OrthoDB" id="9800863at2"/>
<dbReference type="UniPathway" id="UPA00109">
    <property type="reaction ID" value="UER00186"/>
</dbReference>
<dbReference type="Proteomes" id="UP000000537">
    <property type="component" value="Chromosome I"/>
</dbReference>
<dbReference type="GO" id="GO:0005829">
    <property type="term" value="C:cytosol"/>
    <property type="evidence" value="ECO:0007669"/>
    <property type="project" value="TreeGrafter"/>
</dbReference>
<dbReference type="GO" id="GO:0030145">
    <property type="term" value="F:manganese ion binding"/>
    <property type="evidence" value="ECO:0007669"/>
    <property type="project" value="UniProtKB-UniRule"/>
</dbReference>
<dbReference type="GO" id="GO:0004619">
    <property type="term" value="F:phosphoglycerate mutase activity"/>
    <property type="evidence" value="ECO:0007669"/>
    <property type="project" value="UniProtKB-EC"/>
</dbReference>
<dbReference type="GO" id="GO:0006007">
    <property type="term" value="P:glucose catabolic process"/>
    <property type="evidence" value="ECO:0007669"/>
    <property type="project" value="InterPro"/>
</dbReference>
<dbReference type="GO" id="GO:0006096">
    <property type="term" value="P:glycolytic process"/>
    <property type="evidence" value="ECO:0007669"/>
    <property type="project" value="UniProtKB-UniRule"/>
</dbReference>
<dbReference type="CDD" id="cd16010">
    <property type="entry name" value="iPGM"/>
    <property type="match status" value="1"/>
</dbReference>
<dbReference type="FunFam" id="3.40.1450.10:FF:000001">
    <property type="entry name" value="2,3-bisphosphoglycerate-independent phosphoglycerate mutase"/>
    <property type="match status" value="1"/>
</dbReference>
<dbReference type="FunFam" id="3.40.720.10:FF:000001">
    <property type="entry name" value="2,3-bisphosphoglycerate-independent phosphoglycerate mutase"/>
    <property type="match status" value="1"/>
</dbReference>
<dbReference type="Gene3D" id="3.40.720.10">
    <property type="entry name" value="Alkaline Phosphatase, subunit A"/>
    <property type="match status" value="1"/>
</dbReference>
<dbReference type="Gene3D" id="3.40.1450.10">
    <property type="entry name" value="BPG-independent phosphoglycerate mutase, domain B"/>
    <property type="match status" value="1"/>
</dbReference>
<dbReference type="HAMAP" id="MF_01038">
    <property type="entry name" value="GpmI"/>
    <property type="match status" value="1"/>
</dbReference>
<dbReference type="InterPro" id="IPR017850">
    <property type="entry name" value="Alkaline_phosphatase_core_sf"/>
</dbReference>
<dbReference type="InterPro" id="IPR011258">
    <property type="entry name" value="BPG-indep_PGM_N"/>
</dbReference>
<dbReference type="InterPro" id="IPR006124">
    <property type="entry name" value="Metalloenzyme"/>
</dbReference>
<dbReference type="InterPro" id="IPR036646">
    <property type="entry name" value="PGAM_B_sf"/>
</dbReference>
<dbReference type="InterPro" id="IPR005995">
    <property type="entry name" value="Pgm_bpd_ind"/>
</dbReference>
<dbReference type="NCBIfam" id="TIGR01307">
    <property type="entry name" value="pgm_bpd_ind"/>
    <property type="match status" value="1"/>
</dbReference>
<dbReference type="NCBIfam" id="NF003897">
    <property type="entry name" value="PRK05434.1-5"/>
    <property type="match status" value="1"/>
</dbReference>
<dbReference type="PANTHER" id="PTHR31637">
    <property type="entry name" value="2,3-BISPHOSPHOGLYCERATE-INDEPENDENT PHOSPHOGLYCERATE MUTASE"/>
    <property type="match status" value="1"/>
</dbReference>
<dbReference type="PANTHER" id="PTHR31637:SF0">
    <property type="entry name" value="2,3-BISPHOSPHOGLYCERATE-INDEPENDENT PHOSPHOGLYCERATE MUTASE"/>
    <property type="match status" value="1"/>
</dbReference>
<dbReference type="Pfam" id="PF06415">
    <property type="entry name" value="iPGM_N"/>
    <property type="match status" value="1"/>
</dbReference>
<dbReference type="Pfam" id="PF01676">
    <property type="entry name" value="Metalloenzyme"/>
    <property type="match status" value="1"/>
</dbReference>
<dbReference type="PIRSF" id="PIRSF001492">
    <property type="entry name" value="IPGAM"/>
    <property type="match status" value="1"/>
</dbReference>
<dbReference type="SUPFAM" id="SSF64158">
    <property type="entry name" value="2,3-Bisphosphoglycerate-independent phosphoglycerate mutase, substrate-binding domain"/>
    <property type="match status" value="1"/>
</dbReference>
<dbReference type="SUPFAM" id="SSF53649">
    <property type="entry name" value="Alkaline phosphatase-like"/>
    <property type="match status" value="1"/>
</dbReference>
<gene>
    <name evidence="1" type="primary">gpmI</name>
    <name type="ordered locus">VF_0202</name>
</gene>
<name>GPMI_ALIF1</name>